<proteinExistence type="evidence at protein level"/>
<accession>Q9CZC8</accession>
<accession>Q3UKR2</accession>
<accession>Q8CCL3</accession>
<feature type="chain" id="PRO_0000221437" description="Secernin-1">
    <location>
        <begin position="1"/>
        <end position="414"/>
    </location>
</feature>
<feature type="sequence conflict" description="In Ref. 1; BAE26739." evidence="2" ref="1">
    <original>L</original>
    <variation>I</variation>
    <location>
        <position position="127"/>
    </location>
</feature>
<feature type="sequence conflict" description="In Ref. 1; BAC27931." evidence="2" ref="1">
    <original>E</original>
    <variation>K</variation>
    <location>
        <position position="391"/>
    </location>
</feature>
<organism>
    <name type="scientific">Mus musculus</name>
    <name type="common">Mouse</name>
    <dbReference type="NCBI Taxonomy" id="10090"/>
    <lineage>
        <taxon>Eukaryota</taxon>
        <taxon>Metazoa</taxon>
        <taxon>Chordata</taxon>
        <taxon>Craniata</taxon>
        <taxon>Vertebrata</taxon>
        <taxon>Euteleostomi</taxon>
        <taxon>Mammalia</taxon>
        <taxon>Eutheria</taxon>
        <taxon>Euarchontoglires</taxon>
        <taxon>Glires</taxon>
        <taxon>Rodentia</taxon>
        <taxon>Myomorpha</taxon>
        <taxon>Muroidea</taxon>
        <taxon>Muridae</taxon>
        <taxon>Murinae</taxon>
        <taxon>Mus</taxon>
        <taxon>Mus</taxon>
    </lineage>
</organism>
<reference key="1">
    <citation type="journal article" date="2005" name="Science">
        <title>The transcriptional landscape of the mammalian genome.</title>
        <authorList>
            <person name="Carninci P."/>
            <person name="Kasukawa T."/>
            <person name="Katayama S."/>
            <person name="Gough J."/>
            <person name="Frith M.C."/>
            <person name="Maeda N."/>
            <person name="Oyama R."/>
            <person name="Ravasi T."/>
            <person name="Lenhard B."/>
            <person name="Wells C."/>
            <person name="Kodzius R."/>
            <person name="Shimokawa K."/>
            <person name="Bajic V.B."/>
            <person name="Brenner S.E."/>
            <person name="Batalov S."/>
            <person name="Forrest A.R."/>
            <person name="Zavolan M."/>
            <person name="Davis M.J."/>
            <person name="Wilming L.G."/>
            <person name="Aidinis V."/>
            <person name="Allen J.E."/>
            <person name="Ambesi-Impiombato A."/>
            <person name="Apweiler R."/>
            <person name="Aturaliya R.N."/>
            <person name="Bailey T.L."/>
            <person name="Bansal M."/>
            <person name="Baxter L."/>
            <person name="Beisel K.W."/>
            <person name="Bersano T."/>
            <person name="Bono H."/>
            <person name="Chalk A.M."/>
            <person name="Chiu K.P."/>
            <person name="Choudhary V."/>
            <person name="Christoffels A."/>
            <person name="Clutterbuck D.R."/>
            <person name="Crowe M.L."/>
            <person name="Dalla E."/>
            <person name="Dalrymple B.P."/>
            <person name="de Bono B."/>
            <person name="Della Gatta G."/>
            <person name="di Bernardo D."/>
            <person name="Down T."/>
            <person name="Engstrom P."/>
            <person name="Fagiolini M."/>
            <person name="Faulkner G."/>
            <person name="Fletcher C.F."/>
            <person name="Fukushima T."/>
            <person name="Furuno M."/>
            <person name="Futaki S."/>
            <person name="Gariboldi M."/>
            <person name="Georgii-Hemming P."/>
            <person name="Gingeras T.R."/>
            <person name="Gojobori T."/>
            <person name="Green R.E."/>
            <person name="Gustincich S."/>
            <person name="Harbers M."/>
            <person name="Hayashi Y."/>
            <person name="Hensch T.K."/>
            <person name="Hirokawa N."/>
            <person name="Hill D."/>
            <person name="Huminiecki L."/>
            <person name="Iacono M."/>
            <person name="Ikeo K."/>
            <person name="Iwama A."/>
            <person name="Ishikawa T."/>
            <person name="Jakt M."/>
            <person name="Kanapin A."/>
            <person name="Katoh M."/>
            <person name="Kawasawa Y."/>
            <person name="Kelso J."/>
            <person name="Kitamura H."/>
            <person name="Kitano H."/>
            <person name="Kollias G."/>
            <person name="Krishnan S.P."/>
            <person name="Kruger A."/>
            <person name="Kummerfeld S.K."/>
            <person name="Kurochkin I.V."/>
            <person name="Lareau L.F."/>
            <person name="Lazarevic D."/>
            <person name="Lipovich L."/>
            <person name="Liu J."/>
            <person name="Liuni S."/>
            <person name="McWilliam S."/>
            <person name="Madan Babu M."/>
            <person name="Madera M."/>
            <person name="Marchionni L."/>
            <person name="Matsuda H."/>
            <person name="Matsuzawa S."/>
            <person name="Miki H."/>
            <person name="Mignone F."/>
            <person name="Miyake S."/>
            <person name="Morris K."/>
            <person name="Mottagui-Tabar S."/>
            <person name="Mulder N."/>
            <person name="Nakano N."/>
            <person name="Nakauchi H."/>
            <person name="Ng P."/>
            <person name="Nilsson R."/>
            <person name="Nishiguchi S."/>
            <person name="Nishikawa S."/>
            <person name="Nori F."/>
            <person name="Ohara O."/>
            <person name="Okazaki Y."/>
            <person name="Orlando V."/>
            <person name="Pang K.C."/>
            <person name="Pavan W.J."/>
            <person name="Pavesi G."/>
            <person name="Pesole G."/>
            <person name="Petrovsky N."/>
            <person name="Piazza S."/>
            <person name="Reed J."/>
            <person name="Reid J.F."/>
            <person name="Ring B.Z."/>
            <person name="Ringwald M."/>
            <person name="Rost B."/>
            <person name="Ruan Y."/>
            <person name="Salzberg S.L."/>
            <person name="Sandelin A."/>
            <person name="Schneider C."/>
            <person name="Schoenbach C."/>
            <person name="Sekiguchi K."/>
            <person name="Semple C.A."/>
            <person name="Seno S."/>
            <person name="Sessa L."/>
            <person name="Sheng Y."/>
            <person name="Shibata Y."/>
            <person name="Shimada H."/>
            <person name="Shimada K."/>
            <person name="Silva D."/>
            <person name="Sinclair B."/>
            <person name="Sperling S."/>
            <person name="Stupka E."/>
            <person name="Sugiura K."/>
            <person name="Sultana R."/>
            <person name="Takenaka Y."/>
            <person name="Taki K."/>
            <person name="Tammoja K."/>
            <person name="Tan S.L."/>
            <person name="Tang S."/>
            <person name="Taylor M.S."/>
            <person name="Tegner J."/>
            <person name="Teichmann S.A."/>
            <person name="Ueda H.R."/>
            <person name="van Nimwegen E."/>
            <person name="Verardo R."/>
            <person name="Wei C.L."/>
            <person name="Yagi K."/>
            <person name="Yamanishi H."/>
            <person name="Zabarovsky E."/>
            <person name="Zhu S."/>
            <person name="Zimmer A."/>
            <person name="Hide W."/>
            <person name="Bult C."/>
            <person name="Grimmond S.M."/>
            <person name="Teasdale R.D."/>
            <person name="Liu E.T."/>
            <person name="Brusic V."/>
            <person name="Quackenbush J."/>
            <person name="Wahlestedt C."/>
            <person name="Mattick J.S."/>
            <person name="Hume D.A."/>
            <person name="Kai C."/>
            <person name="Sasaki D."/>
            <person name="Tomaru Y."/>
            <person name="Fukuda S."/>
            <person name="Kanamori-Katayama M."/>
            <person name="Suzuki M."/>
            <person name="Aoki J."/>
            <person name="Arakawa T."/>
            <person name="Iida J."/>
            <person name="Imamura K."/>
            <person name="Itoh M."/>
            <person name="Kato T."/>
            <person name="Kawaji H."/>
            <person name="Kawagashira N."/>
            <person name="Kawashima T."/>
            <person name="Kojima M."/>
            <person name="Kondo S."/>
            <person name="Konno H."/>
            <person name="Nakano K."/>
            <person name="Ninomiya N."/>
            <person name="Nishio T."/>
            <person name="Okada M."/>
            <person name="Plessy C."/>
            <person name="Shibata K."/>
            <person name="Shiraki T."/>
            <person name="Suzuki S."/>
            <person name="Tagami M."/>
            <person name="Waki K."/>
            <person name="Watahiki A."/>
            <person name="Okamura-Oho Y."/>
            <person name="Suzuki H."/>
            <person name="Kawai J."/>
            <person name="Hayashizaki Y."/>
        </authorList>
    </citation>
    <scope>NUCLEOTIDE SEQUENCE [LARGE SCALE MRNA]</scope>
    <source>
        <strain>C57BL/6J</strain>
        <tissue>Embryo</tissue>
        <tissue>Pancreas</tissue>
        <tissue>Placenta</tissue>
        <tissue>Spinal cord</tissue>
    </source>
</reference>
<reference key="2">
    <citation type="journal article" date="2003" name="DNA Res.">
        <title>Prediction of the coding sequences of mouse homologues of KIAA gene: III. The complete nucleotide sequences of 500 mouse KIAA-homologous cDNAs identified by screening of terminal sequences of cDNA clones randomly sampled from size-fractionated libraries.</title>
        <authorList>
            <person name="Okazaki N."/>
            <person name="Kikuno R."/>
            <person name="Ohara R."/>
            <person name="Inamoto S."/>
            <person name="Koseki H."/>
            <person name="Hiraoka S."/>
            <person name="Saga Y."/>
            <person name="Nagase T."/>
            <person name="Ohara O."/>
            <person name="Koga H."/>
        </authorList>
    </citation>
    <scope>NUCLEOTIDE SEQUENCE [LARGE SCALE MRNA]</scope>
    <source>
        <tissue>Brain</tissue>
    </source>
</reference>
<reference key="3">
    <citation type="journal article" date="2004" name="Genome Res.">
        <title>The status, quality, and expansion of the NIH full-length cDNA project: the Mammalian Gene Collection (MGC).</title>
        <authorList>
            <consortium name="The MGC Project Team"/>
        </authorList>
    </citation>
    <scope>NUCLEOTIDE SEQUENCE [LARGE SCALE MRNA]</scope>
    <source>
        <strain>C57BL/6J</strain>
        <tissue>Mammary tumor</tissue>
    </source>
</reference>
<reference key="4">
    <citation type="submission" date="2007-03" db="UniProtKB">
        <authorList>
            <person name="Lubec G."/>
            <person name="Klug S."/>
        </authorList>
    </citation>
    <scope>PROTEIN SEQUENCE OF 33-51 AND 262-302</scope>
    <scope>IDENTIFICATION BY MASS SPECTROMETRY</scope>
    <source>
        <tissue>Hippocampus</tissue>
    </source>
</reference>
<reference key="5">
    <citation type="journal article" date="2010" name="Cell">
        <title>A tissue-specific atlas of mouse protein phosphorylation and expression.</title>
        <authorList>
            <person name="Huttlin E.L."/>
            <person name="Jedrychowski M.P."/>
            <person name="Elias J.E."/>
            <person name="Goswami T."/>
            <person name="Rad R."/>
            <person name="Beausoleil S.A."/>
            <person name="Villen J."/>
            <person name="Haas W."/>
            <person name="Sowa M.E."/>
            <person name="Gygi S.P."/>
        </authorList>
    </citation>
    <scope>IDENTIFICATION BY MASS SPECTROMETRY [LARGE SCALE ANALYSIS]</scope>
    <source>
        <tissue>Brain</tissue>
        <tissue>Lung</tissue>
        <tissue>Testis</tissue>
    </source>
</reference>
<dbReference type="EMBL" id="AK012765">
    <property type="protein sequence ID" value="BAB28453.1"/>
    <property type="molecule type" value="mRNA"/>
</dbReference>
<dbReference type="EMBL" id="AK032573">
    <property type="protein sequence ID" value="BAC27931.1"/>
    <property type="molecule type" value="mRNA"/>
</dbReference>
<dbReference type="EMBL" id="AK050481">
    <property type="protein sequence ID" value="BAC34280.1"/>
    <property type="molecule type" value="mRNA"/>
</dbReference>
<dbReference type="EMBL" id="AK082953">
    <property type="protein sequence ID" value="BAC38706.1"/>
    <property type="molecule type" value="mRNA"/>
</dbReference>
<dbReference type="EMBL" id="AK145904">
    <property type="protein sequence ID" value="BAE26739.1"/>
    <property type="molecule type" value="mRNA"/>
</dbReference>
<dbReference type="EMBL" id="AK129084">
    <property type="protein sequence ID" value="BAC97894.1"/>
    <property type="status" value="ALT_INIT"/>
    <property type="molecule type" value="mRNA"/>
</dbReference>
<dbReference type="EMBL" id="BC023889">
    <property type="protein sequence ID" value="AAH23889.1"/>
    <property type="molecule type" value="mRNA"/>
</dbReference>
<dbReference type="CCDS" id="CCDS20156.1"/>
<dbReference type="RefSeq" id="NP_001404631.1">
    <property type="nucleotide sequence ID" value="NM_001417702.1"/>
</dbReference>
<dbReference type="RefSeq" id="NP_001404632.1">
    <property type="nucleotide sequence ID" value="NM_001417703.1"/>
</dbReference>
<dbReference type="RefSeq" id="NP_001404633.1">
    <property type="nucleotide sequence ID" value="NM_001417704.1"/>
</dbReference>
<dbReference type="RefSeq" id="NP_081544.1">
    <property type="nucleotide sequence ID" value="NM_027268.3"/>
</dbReference>
<dbReference type="RefSeq" id="XP_006506635.1">
    <property type="nucleotide sequence ID" value="XM_006506572.2"/>
</dbReference>
<dbReference type="RefSeq" id="XP_011239761.1">
    <property type="nucleotide sequence ID" value="XM_011241459.2"/>
</dbReference>
<dbReference type="SMR" id="Q9CZC8"/>
<dbReference type="BioGRID" id="213767">
    <property type="interactions" value="10"/>
</dbReference>
<dbReference type="FunCoup" id="Q9CZC8">
    <property type="interactions" value="268"/>
</dbReference>
<dbReference type="IntAct" id="Q9CZC8">
    <property type="interactions" value="1"/>
</dbReference>
<dbReference type="STRING" id="10090.ENSMUSP00000019268"/>
<dbReference type="MEROPS" id="C69.003"/>
<dbReference type="iPTMnet" id="Q9CZC8"/>
<dbReference type="PhosphoSitePlus" id="Q9CZC8"/>
<dbReference type="SwissPalm" id="Q9CZC8"/>
<dbReference type="PaxDb" id="10090-ENSMUSP00000019268"/>
<dbReference type="PeptideAtlas" id="Q9CZC8"/>
<dbReference type="ProteomicsDB" id="256715"/>
<dbReference type="Pumba" id="Q9CZC8"/>
<dbReference type="Antibodypedia" id="12563">
    <property type="antibodies" value="189 antibodies from 30 providers"/>
</dbReference>
<dbReference type="DNASU" id="69938"/>
<dbReference type="Ensembl" id="ENSMUST00000019268.11">
    <property type="protein sequence ID" value="ENSMUSP00000019268.5"/>
    <property type="gene ID" value="ENSMUSG00000019124.11"/>
</dbReference>
<dbReference type="GeneID" id="69938"/>
<dbReference type="KEGG" id="mmu:69938"/>
<dbReference type="UCSC" id="uc009bzw.1">
    <property type="organism name" value="mouse"/>
</dbReference>
<dbReference type="AGR" id="MGI:1917188"/>
<dbReference type="CTD" id="9805"/>
<dbReference type="MGI" id="MGI:1917188">
    <property type="gene designation" value="Scrn1"/>
</dbReference>
<dbReference type="VEuPathDB" id="HostDB:ENSMUSG00000019124"/>
<dbReference type="eggNOG" id="ENOG502QTSN">
    <property type="taxonomic scope" value="Eukaryota"/>
</dbReference>
<dbReference type="GeneTree" id="ENSGT00390000013474"/>
<dbReference type="HOGENOM" id="CLU_046840_0_0_1"/>
<dbReference type="InParanoid" id="Q9CZC8"/>
<dbReference type="OMA" id="HEWARSV"/>
<dbReference type="OrthoDB" id="5175656at2759"/>
<dbReference type="PhylomeDB" id="Q9CZC8"/>
<dbReference type="TreeFam" id="TF323890"/>
<dbReference type="BioGRID-ORCS" id="69938">
    <property type="hits" value="2 hits in 77 CRISPR screens"/>
</dbReference>
<dbReference type="ChiTaRS" id="Scrn1">
    <property type="organism name" value="mouse"/>
</dbReference>
<dbReference type="PRO" id="PR:Q9CZC8"/>
<dbReference type="Proteomes" id="UP000000589">
    <property type="component" value="Chromosome 6"/>
</dbReference>
<dbReference type="RNAct" id="Q9CZC8">
    <property type="molecule type" value="protein"/>
</dbReference>
<dbReference type="Bgee" id="ENSMUSG00000019124">
    <property type="expression patterns" value="Expressed in otolith organ and 217 other cell types or tissues"/>
</dbReference>
<dbReference type="ExpressionAtlas" id="Q9CZC8">
    <property type="expression patterns" value="baseline and differential"/>
</dbReference>
<dbReference type="GO" id="GO:0005737">
    <property type="term" value="C:cytoplasm"/>
    <property type="evidence" value="ECO:0007669"/>
    <property type="project" value="UniProtKB-SubCell"/>
</dbReference>
<dbReference type="GO" id="GO:0031965">
    <property type="term" value="C:nuclear membrane"/>
    <property type="evidence" value="ECO:0007669"/>
    <property type="project" value="Ensembl"/>
</dbReference>
<dbReference type="GO" id="GO:0098793">
    <property type="term" value="C:presynapse"/>
    <property type="evidence" value="ECO:0007669"/>
    <property type="project" value="Ensembl"/>
</dbReference>
<dbReference type="GO" id="GO:0070004">
    <property type="term" value="F:cysteine-type exopeptidase activity"/>
    <property type="evidence" value="ECO:0007669"/>
    <property type="project" value="InterPro"/>
</dbReference>
<dbReference type="GO" id="GO:0016805">
    <property type="term" value="F:dipeptidase activity"/>
    <property type="evidence" value="ECO:0007669"/>
    <property type="project" value="InterPro"/>
</dbReference>
<dbReference type="GO" id="GO:0006887">
    <property type="term" value="P:exocytosis"/>
    <property type="evidence" value="ECO:0000250"/>
    <property type="project" value="UniProtKB"/>
</dbReference>
<dbReference type="GO" id="GO:0006508">
    <property type="term" value="P:proteolysis"/>
    <property type="evidence" value="ECO:0007669"/>
    <property type="project" value="InterPro"/>
</dbReference>
<dbReference type="GO" id="GO:0098693">
    <property type="term" value="P:regulation of synaptic vesicle cycle"/>
    <property type="evidence" value="ECO:0007669"/>
    <property type="project" value="Ensembl"/>
</dbReference>
<dbReference type="FunFam" id="3.60.60.10:FF:000001">
    <property type="entry name" value="Secernin 1"/>
    <property type="match status" value="1"/>
</dbReference>
<dbReference type="Gene3D" id="3.60.60.10">
    <property type="entry name" value="Penicillin V Acylase, Chain A"/>
    <property type="match status" value="1"/>
</dbReference>
<dbReference type="InterPro" id="IPR005322">
    <property type="entry name" value="Peptidase_C69"/>
</dbReference>
<dbReference type="PANTHER" id="PTHR12994">
    <property type="entry name" value="SECERNIN"/>
    <property type="match status" value="1"/>
</dbReference>
<dbReference type="PANTHER" id="PTHR12994:SF7">
    <property type="entry name" value="SECERNIN-1"/>
    <property type="match status" value="1"/>
</dbReference>
<dbReference type="Pfam" id="PF03577">
    <property type="entry name" value="Peptidase_C69"/>
    <property type="match status" value="1"/>
</dbReference>
<comment type="function">
    <text evidence="1">Regulates exocytosis in mast cells. Increases both the extent of secretion and the sensitivity of mast cells to stimulation with calcium (By similarity).</text>
</comment>
<comment type="subcellular location">
    <subcellularLocation>
        <location evidence="1">Cytoplasm</location>
    </subcellularLocation>
</comment>
<comment type="miscellaneous">
    <text>'Secern' is an archaic English term meaning 'secrete'.</text>
</comment>
<comment type="similarity">
    <text evidence="2">Belongs to the peptidase C69 family. Secernin subfamily.</text>
</comment>
<comment type="sequence caution" evidence="2">
    <conflict type="erroneous initiation">
        <sequence resource="EMBL-CDS" id="BAC97894"/>
    </conflict>
</comment>
<name>SCRN1_MOUSE</name>
<keyword id="KW-0963">Cytoplasm</keyword>
<keyword id="KW-0903">Direct protein sequencing</keyword>
<keyword id="KW-0268">Exocytosis</keyword>
<keyword id="KW-1185">Reference proteome</keyword>
<evidence type="ECO:0000250" key="1"/>
<evidence type="ECO:0000305" key="2"/>
<sequence length="414" mass="46326">MSGAPPSYSFVALPPRAKDGLVVFGKNSARPRDEVQEVVYFPAVDHDAESKVECTYISIDQVPRTHAIVISRPAWLWGAEMGANEHGVCIANEAINAREPAAETEALLGMDLVRLGLERGTTAKEALDIIVSLLDEHGQGGNYYEDAHSCHSFQSAYLLVDRDEAWVLETVGKYWAAERITEGVRCICNHLSLATKLDEEHPELRTYAQSQGWWTGDDEFNFAQVFSPADDRLDCCAGQDSLEKQEESITVQTMINILRDKASGVCIDSESFLTTASIVSVLPQNRSSPCIHYFTGTPDPSRSIFKPFIFVDDVKLVPKAQSPCFGDDDPAKKEPRFQEKPDRRHELYKAHEWARAVIESDEEQGRTLRKTMLELEKQGLEAMDEILSSPEPPDPAEVGDLFYDCVDTEMKFFK</sequence>
<gene>
    <name type="primary">Scrn1</name>
    <name type="synonym">Kiaa0193</name>
</gene>
<protein>
    <recommendedName>
        <fullName>Secernin-1</fullName>
    </recommendedName>
</protein>